<comment type="similarity">
    <text evidence="1">Belongs to the 2H phosphoesterase superfamily. YjcG family.</text>
</comment>
<keyword id="KW-0378">Hydrolase</keyword>
<keyword id="KW-1185">Reference proteome</keyword>
<sequence length="171" mass="19959">MNYSIVMFPSKPFQDTANGYRRRYDAHYANIPPHITLKERFSIAEEERSKIIKALRTIGQTHKPIAIDVYKVDTFYPQSTTIYYKIKENDRLLALYEALHRDPFPRKRAHPVFVPHITIAQGLPQSEHADIVGQLKMIDVSHQETIDRFQLLKQLDNGSWAVYETFLLEGD</sequence>
<dbReference type="EC" id="3.1.-.-" evidence="1"/>
<dbReference type="EMBL" id="AP006627">
    <property type="protein sequence ID" value="BAD64276.1"/>
    <property type="molecule type" value="Genomic_DNA"/>
</dbReference>
<dbReference type="RefSeq" id="WP_011246584.1">
    <property type="nucleotide sequence ID" value="NC_006582.1"/>
</dbReference>
<dbReference type="SMR" id="Q5WH79"/>
<dbReference type="STRING" id="66692.ABC1741"/>
<dbReference type="KEGG" id="bcl:ABC1741"/>
<dbReference type="eggNOG" id="COG1514">
    <property type="taxonomic scope" value="Bacteria"/>
</dbReference>
<dbReference type="HOGENOM" id="CLU_132020_0_0_9"/>
<dbReference type="OrthoDB" id="1524661at2"/>
<dbReference type="Proteomes" id="UP000001168">
    <property type="component" value="Chromosome"/>
</dbReference>
<dbReference type="GO" id="GO:0016788">
    <property type="term" value="F:hydrolase activity, acting on ester bonds"/>
    <property type="evidence" value="ECO:0007669"/>
    <property type="project" value="UniProtKB-UniRule"/>
</dbReference>
<dbReference type="Gene3D" id="3.90.1140.10">
    <property type="entry name" value="Cyclic phosphodiesterase"/>
    <property type="match status" value="1"/>
</dbReference>
<dbReference type="HAMAP" id="MF_01444">
    <property type="entry name" value="2H_phosphoesterase_YjcG"/>
    <property type="match status" value="1"/>
</dbReference>
<dbReference type="InterPro" id="IPR050580">
    <property type="entry name" value="2H_phosphoesterase_YjcG-like"/>
</dbReference>
<dbReference type="InterPro" id="IPR009097">
    <property type="entry name" value="Cyclic_Pdiesterase"/>
</dbReference>
<dbReference type="InterPro" id="IPR022932">
    <property type="entry name" value="YjcG"/>
</dbReference>
<dbReference type="NCBIfam" id="NF010223">
    <property type="entry name" value="PRK13679.1"/>
    <property type="match status" value="1"/>
</dbReference>
<dbReference type="PANTHER" id="PTHR40037:SF1">
    <property type="entry name" value="PHOSPHOESTERASE SAOUHSC_00951-RELATED"/>
    <property type="match status" value="1"/>
</dbReference>
<dbReference type="PANTHER" id="PTHR40037">
    <property type="entry name" value="PHOSPHOESTERASE YJCG-RELATED"/>
    <property type="match status" value="1"/>
</dbReference>
<dbReference type="Pfam" id="PF13563">
    <property type="entry name" value="2_5_RNA_ligase2"/>
    <property type="match status" value="1"/>
</dbReference>
<dbReference type="SUPFAM" id="SSF55144">
    <property type="entry name" value="LigT-like"/>
    <property type="match status" value="1"/>
</dbReference>
<proteinExistence type="inferred from homology"/>
<name>Y1741_SHOC1</name>
<gene>
    <name type="ordered locus">ABC1741</name>
</gene>
<protein>
    <recommendedName>
        <fullName evidence="1">Putative phosphoesterase ABC1741</fullName>
        <ecNumber evidence="1">3.1.-.-</ecNumber>
    </recommendedName>
</protein>
<reference key="1">
    <citation type="submission" date="2003-10" db="EMBL/GenBank/DDBJ databases">
        <title>The complete genome sequence of the alkaliphilic Bacillus clausii KSM-K16.</title>
        <authorList>
            <person name="Takaki Y."/>
            <person name="Kageyama Y."/>
            <person name="Shimamura S."/>
            <person name="Suzuki H."/>
            <person name="Nishi S."/>
            <person name="Hatada Y."/>
            <person name="Kawai S."/>
            <person name="Ito S."/>
            <person name="Horikoshi K."/>
        </authorList>
    </citation>
    <scope>NUCLEOTIDE SEQUENCE [LARGE SCALE GENOMIC DNA]</scope>
    <source>
        <strain>KSM-K16</strain>
    </source>
</reference>
<evidence type="ECO:0000255" key="1">
    <source>
        <dbReference type="HAMAP-Rule" id="MF_01444"/>
    </source>
</evidence>
<organism>
    <name type="scientific">Shouchella clausii (strain KSM-K16)</name>
    <name type="common">Alkalihalobacillus clausii</name>
    <dbReference type="NCBI Taxonomy" id="66692"/>
    <lineage>
        <taxon>Bacteria</taxon>
        <taxon>Bacillati</taxon>
        <taxon>Bacillota</taxon>
        <taxon>Bacilli</taxon>
        <taxon>Bacillales</taxon>
        <taxon>Bacillaceae</taxon>
        <taxon>Shouchella</taxon>
    </lineage>
</organism>
<feature type="chain" id="PRO_0000299328" description="Putative phosphoesterase ABC1741">
    <location>
        <begin position="1"/>
        <end position="171"/>
    </location>
</feature>
<feature type="short sequence motif" description="HXTX 1" evidence="1">
    <location>
        <begin position="34"/>
        <end position="37"/>
    </location>
</feature>
<feature type="short sequence motif" description="HXTX 2" evidence="1">
    <location>
        <begin position="116"/>
        <end position="119"/>
    </location>
</feature>
<feature type="active site" description="Proton donor" evidence="1">
    <location>
        <position position="34"/>
    </location>
</feature>
<feature type="active site" description="Proton acceptor" evidence="1">
    <location>
        <position position="116"/>
    </location>
</feature>
<accession>Q5WH79</accession>